<evidence type="ECO:0000255" key="1">
    <source>
        <dbReference type="HAMAP-Rule" id="MF_00133"/>
    </source>
</evidence>
<gene>
    <name evidence="1" type="primary">trpB</name>
    <name type="ordered locus">Lm4b_01639</name>
</gene>
<sequence length="400" mass="43790">MTYQAPDENGFYGKFGGRFVPETLMKAVKELDEAYRASKTDPAFQKELNYYLKEYVGRETPLYFAEQLTAHAGGAKIYLKREDLNHTGAHKINNTIGQALLARQMGKQKVVAETGAGQHGVATATVAALFNMECTIFMGEEDVKRQSLNVFRMELLGAKVVSVKAGSRTLKDAVNEALRFWVANVEDTHYIMGSVLGPHPFPEIVRDYQSVIGIEARKQHLEKEGKLPDAIVACVGGGSNAMGLFYPFVDDVSVQMHGVEAAGHGLETEFHAATISKGEIGILHGAMMDVLQDENGQILEAFSISAGLDYPGIGPEHSFFRDLGRAAYHSVTDDEAVEAFQLLCRTEGIIPALESSHAISYAVKLASQMRPEESMVVCLSGRGDKDVNQLKERLEGQIND</sequence>
<feature type="chain" id="PRO_1000203193" description="Tryptophan synthase beta chain">
    <location>
        <begin position="1"/>
        <end position="400"/>
    </location>
</feature>
<feature type="modified residue" description="N6-(pyridoxal phosphate)lysine" evidence="1">
    <location>
        <position position="91"/>
    </location>
</feature>
<proteinExistence type="inferred from homology"/>
<keyword id="KW-0028">Amino-acid biosynthesis</keyword>
<keyword id="KW-0057">Aromatic amino acid biosynthesis</keyword>
<keyword id="KW-0456">Lyase</keyword>
<keyword id="KW-0663">Pyridoxal phosphate</keyword>
<keyword id="KW-0822">Tryptophan biosynthesis</keyword>
<protein>
    <recommendedName>
        <fullName evidence="1">Tryptophan synthase beta chain</fullName>
        <ecNumber evidence="1">4.2.1.20</ecNumber>
    </recommendedName>
</protein>
<organism>
    <name type="scientific">Listeria monocytogenes serotype 4b (strain CLIP80459)</name>
    <dbReference type="NCBI Taxonomy" id="568819"/>
    <lineage>
        <taxon>Bacteria</taxon>
        <taxon>Bacillati</taxon>
        <taxon>Bacillota</taxon>
        <taxon>Bacilli</taxon>
        <taxon>Bacillales</taxon>
        <taxon>Listeriaceae</taxon>
        <taxon>Listeria</taxon>
    </lineage>
</organism>
<reference key="1">
    <citation type="journal article" date="2012" name="BMC Genomics">
        <title>Comparative genomics and transcriptomics of lineages I, II, and III strains of Listeria monocytogenes.</title>
        <authorList>
            <person name="Hain T."/>
            <person name="Ghai R."/>
            <person name="Billion A."/>
            <person name="Kuenne C.T."/>
            <person name="Steinweg C."/>
            <person name="Izar B."/>
            <person name="Mohamed W."/>
            <person name="Mraheil M."/>
            <person name="Domann E."/>
            <person name="Schaffrath S."/>
            <person name="Karst U."/>
            <person name="Goesmann A."/>
            <person name="Oehm S."/>
            <person name="Puhler A."/>
            <person name="Merkl R."/>
            <person name="Vorwerk S."/>
            <person name="Glaser P."/>
            <person name="Garrido P."/>
            <person name="Rusniok C."/>
            <person name="Buchrieser C."/>
            <person name="Goebel W."/>
            <person name="Chakraborty T."/>
        </authorList>
    </citation>
    <scope>NUCLEOTIDE SEQUENCE [LARGE SCALE GENOMIC DNA]</scope>
    <source>
        <strain>CLIP80459</strain>
    </source>
</reference>
<name>TRPB_LISMC</name>
<accession>C1KVS5</accession>
<dbReference type="EC" id="4.2.1.20" evidence="1"/>
<dbReference type="EMBL" id="FM242711">
    <property type="protein sequence ID" value="CAS05400.1"/>
    <property type="molecule type" value="Genomic_DNA"/>
</dbReference>
<dbReference type="RefSeq" id="WP_003726798.1">
    <property type="nucleotide sequence ID" value="NC_012488.1"/>
</dbReference>
<dbReference type="SMR" id="C1KVS5"/>
<dbReference type="KEGG" id="lmc:Lm4b_01639"/>
<dbReference type="HOGENOM" id="CLU_016734_3_1_9"/>
<dbReference type="UniPathway" id="UPA00035">
    <property type="reaction ID" value="UER00044"/>
</dbReference>
<dbReference type="GO" id="GO:0005737">
    <property type="term" value="C:cytoplasm"/>
    <property type="evidence" value="ECO:0007669"/>
    <property type="project" value="TreeGrafter"/>
</dbReference>
<dbReference type="GO" id="GO:0004834">
    <property type="term" value="F:tryptophan synthase activity"/>
    <property type="evidence" value="ECO:0007669"/>
    <property type="project" value="UniProtKB-UniRule"/>
</dbReference>
<dbReference type="CDD" id="cd06446">
    <property type="entry name" value="Trp-synth_B"/>
    <property type="match status" value="1"/>
</dbReference>
<dbReference type="FunFam" id="3.40.50.1100:FF:000001">
    <property type="entry name" value="Tryptophan synthase beta chain"/>
    <property type="match status" value="1"/>
</dbReference>
<dbReference type="FunFam" id="3.40.50.1100:FF:000004">
    <property type="entry name" value="Tryptophan synthase beta chain"/>
    <property type="match status" value="1"/>
</dbReference>
<dbReference type="Gene3D" id="3.40.50.1100">
    <property type="match status" value="2"/>
</dbReference>
<dbReference type="HAMAP" id="MF_00133">
    <property type="entry name" value="Trp_synth_beta"/>
    <property type="match status" value="1"/>
</dbReference>
<dbReference type="InterPro" id="IPR006653">
    <property type="entry name" value="Trp_synth_b_CS"/>
</dbReference>
<dbReference type="InterPro" id="IPR006654">
    <property type="entry name" value="Trp_synth_beta"/>
</dbReference>
<dbReference type="InterPro" id="IPR023026">
    <property type="entry name" value="Trp_synth_beta/beta-like"/>
</dbReference>
<dbReference type="InterPro" id="IPR001926">
    <property type="entry name" value="TrpB-like_PALP"/>
</dbReference>
<dbReference type="InterPro" id="IPR036052">
    <property type="entry name" value="TrpB-like_PALP_sf"/>
</dbReference>
<dbReference type="NCBIfam" id="TIGR00263">
    <property type="entry name" value="trpB"/>
    <property type="match status" value="1"/>
</dbReference>
<dbReference type="PANTHER" id="PTHR48077:SF3">
    <property type="entry name" value="TRYPTOPHAN SYNTHASE"/>
    <property type="match status" value="1"/>
</dbReference>
<dbReference type="PANTHER" id="PTHR48077">
    <property type="entry name" value="TRYPTOPHAN SYNTHASE-RELATED"/>
    <property type="match status" value="1"/>
</dbReference>
<dbReference type="Pfam" id="PF00291">
    <property type="entry name" value="PALP"/>
    <property type="match status" value="1"/>
</dbReference>
<dbReference type="PIRSF" id="PIRSF001413">
    <property type="entry name" value="Trp_syn_beta"/>
    <property type="match status" value="1"/>
</dbReference>
<dbReference type="SUPFAM" id="SSF53686">
    <property type="entry name" value="Tryptophan synthase beta subunit-like PLP-dependent enzymes"/>
    <property type="match status" value="1"/>
</dbReference>
<dbReference type="PROSITE" id="PS00168">
    <property type="entry name" value="TRP_SYNTHASE_BETA"/>
    <property type="match status" value="1"/>
</dbReference>
<comment type="function">
    <text evidence="1">The beta subunit is responsible for the synthesis of L-tryptophan from indole and L-serine.</text>
</comment>
<comment type="catalytic activity">
    <reaction evidence="1">
        <text>(1S,2R)-1-C-(indol-3-yl)glycerol 3-phosphate + L-serine = D-glyceraldehyde 3-phosphate + L-tryptophan + H2O</text>
        <dbReference type="Rhea" id="RHEA:10532"/>
        <dbReference type="ChEBI" id="CHEBI:15377"/>
        <dbReference type="ChEBI" id="CHEBI:33384"/>
        <dbReference type="ChEBI" id="CHEBI:57912"/>
        <dbReference type="ChEBI" id="CHEBI:58866"/>
        <dbReference type="ChEBI" id="CHEBI:59776"/>
        <dbReference type="EC" id="4.2.1.20"/>
    </reaction>
</comment>
<comment type="cofactor">
    <cofactor evidence="1">
        <name>pyridoxal 5'-phosphate</name>
        <dbReference type="ChEBI" id="CHEBI:597326"/>
    </cofactor>
</comment>
<comment type="pathway">
    <text evidence="1">Amino-acid biosynthesis; L-tryptophan biosynthesis; L-tryptophan from chorismate: step 5/5.</text>
</comment>
<comment type="subunit">
    <text evidence="1">Tetramer of two alpha and two beta chains.</text>
</comment>
<comment type="similarity">
    <text evidence="1">Belongs to the TrpB family.</text>
</comment>